<gene>
    <name evidence="5" type="primary">fdhA</name>
    <name evidence="5" type="ordered locus">PLES_58161</name>
</gene>
<reference evidence="5" key="1">
    <citation type="journal article" date="2009" name="Genome Res.">
        <title>Newly introduced genomic prophage islands are critical determinants of in vivo competitiveness in the Liverpool epidemic strain of Pseudomonas aeruginosa.</title>
        <authorList>
            <person name="Winstanley C."/>
            <person name="Langille M.G.I."/>
            <person name="Fothergill J.L."/>
            <person name="Kukavica-Ibrulj I."/>
            <person name="Paradis-Bleau C."/>
            <person name="Sanschagrin F."/>
            <person name="Thomson N.R."/>
            <person name="Winsor G.L."/>
            <person name="Quail M.A."/>
            <person name="Lennard N."/>
            <person name="Bignell A."/>
            <person name="Clarke L."/>
            <person name="Seeger K."/>
            <person name="Saunders D."/>
            <person name="Harris D."/>
            <person name="Parkhill J."/>
            <person name="Hancock R.E.W."/>
            <person name="Brinkman F.S.L."/>
            <person name="Levesque R.C."/>
        </authorList>
    </citation>
    <scope>NUCLEOTIDE SEQUENCE [LARGE SCALE GENOMIC DNA]</scope>
    <source>
        <strain>LESB58</strain>
    </source>
</reference>
<reference key="2">
    <citation type="journal article" date="2013" name="Protein Expr. Purif.">
        <title>Expression, purification, and characterization of formaldehyde dehydrogenase from Pseudomonas aeruginosa.</title>
        <authorList>
            <person name="Zhang W."/>
            <person name="Chen S."/>
            <person name="Liao Y."/>
            <person name="Wang D."/>
            <person name="Ding J."/>
            <person name="Wang Y."/>
            <person name="Ran X."/>
            <person name="Lu D."/>
            <person name="Zhu H."/>
        </authorList>
    </citation>
    <scope>FUNCTION</scope>
    <scope>CATALYTIC ACTIVITY</scope>
    <scope>BIOPHYSICOCHEMICAL PROPERTIES</scope>
    <scope>SUBUNIT</scope>
    <source>
        <strain>LESB58</strain>
    </source>
</reference>
<reference evidence="6" key="3">
    <citation type="journal article" date="2013" name="Acta Crystallogr. F">
        <title>Structure of formaldehyde dehydrogenase from Pseudomonas aeruginosa: the binary complex with the cofactor NAD+.</title>
        <authorList>
            <person name="Liao Y."/>
            <person name="Chen S."/>
            <person name="Wang D."/>
            <person name="Zhang W."/>
            <person name="Wang S."/>
            <person name="Ding J."/>
            <person name="Wang Y."/>
            <person name="Cai L."/>
            <person name="Ran X."/>
            <person name="Wang X."/>
            <person name="Zhu H."/>
        </authorList>
    </citation>
    <scope>X-RAY CRYSTALLOGRAPHY (2.70 ANGSTROMS) IN COMPLEX WITH NAD AND ZINC</scope>
    <scope>CATALYTIC ACTIVITY</scope>
    <scope>COFACTOR</scope>
    <scope>BIOPHYSICOCHEMICAL PROPERTIES</scope>
    <scope>SUBUNIT</scope>
    <source>
        <strain>LESB58</strain>
    </source>
</reference>
<evidence type="ECO:0000269" key="1">
    <source>
    </source>
</evidence>
<evidence type="ECO:0000269" key="2">
    <source>
    </source>
</evidence>
<evidence type="ECO:0000303" key="3">
    <source>
    </source>
</evidence>
<evidence type="ECO:0000305" key="4"/>
<evidence type="ECO:0000312" key="5">
    <source>
        <dbReference type="EMBL" id="CAW30570.1"/>
    </source>
</evidence>
<evidence type="ECO:0007744" key="6">
    <source>
        <dbReference type="PDB" id="4JLW"/>
    </source>
</evidence>
<protein>
    <recommendedName>
        <fullName evidence="3">Glutathione-independent formaldehyde dehydrogenase</fullName>
        <shortName evidence="4">FALDH</shortName>
        <shortName evidence="3">FDH</shortName>
        <ecNumber evidence="1 2">1.2.1.46</ecNumber>
    </recommendedName>
</protein>
<name>FALDH_PSEA8</name>
<dbReference type="EC" id="1.2.1.46" evidence="1 2"/>
<dbReference type="EMBL" id="FM209186">
    <property type="protein sequence ID" value="CAW30570.1"/>
    <property type="molecule type" value="Genomic_DNA"/>
</dbReference>
<dbReference type="RefSeq" id="WP_003096788.1">
    <property type="nucleotide sequence ID" value="NC_011770.1"/>
</dbReference>
<dbReference type="PDB" id="4JLW">
    <property type="method" value="X-ray"/>
    <property type="resolution" value="2.70 A"/>
    <property type="chains" value="A/B/C/D=1-399"/>
</dbReference>
<dbReference type="PDBsum" id="4JLW"/>
<dbReference type="CDD" id="cd08282">
    <property type="entry name" value="PFDH_like"/>
    <property type="match status" value="1"/>
</dbReference>
<dbReference type="FunFam" id="3.40.50.720:FF:000166">
    <property type="entry name" value="Glutathione-independent formaldehyde dehydrogenase"/>
    <property type="match status" value="1"/>
</dbReference>
<dbReference type="Gene3D" id="3.90.180.10">
    <property type="entry name" value="Medium-chain alcohol dehydrogenases, catalytic domain"/>
    <property type="match status" value="1"/>
</dbReference>
<dbReference type="Gene3D" id="3.40.50.720">
    <property type="entry name" value="NAD(P)-binding Rossmann-like Domain"/>
    <property type="match status" value="1"/>
</dbReference>
<dbReference type="InterPro" id="IPR013149">
    <property type="entry name" value="ADH-like_C"/>
</dbReference>
<dbReference type="InterPro" id="IPR013154">
    <property type="entry name" value="ADH-like_N"/>
</dbReference>
<dbReference type="InterPro" id="IPR002328">
    <property type="entry name" value="ADH_Zn_CS"/>
</dbReference>
<dbReference type="InterPro" id="IPR011032">
    <property type="entry name" value="GroES-like_sf"/>
</dbReference>
<dbReference type="InterPro" id="IPR014184">
    <property type="entry name" value="HCHO_DH_non_GSH"/>
</dbReference>
<dbReference type="InterPro" id="IPR036291">
    <property type="entry name" value="NAD(P)-bd_dom_sf"/>
</dbReference>
<dbReference type="NCBIfam" id="TIGR02819">
    <property type="entry name" value="fdhA_non_GSH"/>
    <property type="match status" value="1"/>
</dbReference>
<dbReference type="PANTHER" id="PTHR42813:SF3">
    <property type="entry name" value="GLUTATHIONE-INDEPENDENT FORMALDEHYDE DEHYDROGENASE"/>
    <property type="match status" value="1"/>
</dbReference>
<dbReference type="PANTHER" id="PTHR42813">
    <property type="entry name" value="ZINC-TYPE ALCOHOL DEHYDROGENASE-LIKE"/>
    <property type="match status" value="1"/>
</dbReference>
<dbReference type="Pfam" id="PF08240">
    <property type="entry name" value="ADH_N"/>
    <property type="match status" value="1"/>
</dbReference>
<dbReference type="Pfam" id="PF00107">
    <property type="entry name" value="ADH_zinc_N"/>
    <property type="match status" value="1"/>
</dbReference>
<dbReference type="SUPFAM" id="SSF50129">
    <property type="entry name" value="GroES-like"/>
    <property type="match status" value="1"/>
</dbReference>
<dbReference type="SUPFAM" id="SSF51735">
    <property type="entry name" value="NAD(P)-binding Rossmann-fold domains"/>
    <property type="match status" value="1"/>
</dbReference>
<dbReference type="PROSITE" id="PS00059">
    <property type="entry name" value="ADH_ZINC"/>
    <property type="match status" value="1"/>
</dbReference>
<feature type="chain" id="PRO_0000461904" description="Glutathione-independent formaldehyde dehydrogenase">
    <location>
        <begin position="1"/>
        <end position="399"/>
    </location>
</feature>
<feature type="binding site" evidence="1 6">
    <location>
        <position position="47"/>
    </location>
    <ligand>
        <name>Zn(2+)</name>
        <dbReference type="ChEBI" id="CHEBI:29105"/>
        <label>1</label>
        <note>catalytic</note>
    </ligand>
</feature>
<feature type="binding site" evidence="1 6">
    <location>
        <position position="48"/>
    </location>
    <ligand>
        <name>NAD(+)</name>
        <dbReference type="ChEBI" id="CHEBI:57540"/>
    </ligand>
</feature>
<feature type="binding site" evidence="1 6">
    <location>
        <position position="49"/>
    </location>
    <ligand>
        <name>NAD(+)</name>
        <dbReference type="ChEBI" id="CHEBI:57540"/>
    </ligand>
</feature>
<feature type="binding site" evidence="1 6">
    <location>
        <position position="52"/>
    </location>
    <ligand>
        <name>NAD(+)</name>
        <dbReference type="ChEBI" id="CHEBI:57540"/>
    </ligand>
</feature>
<feature type="binding site" evidence="1 6">
    <location>
        <position position="68"/>
    </location>
    <ligand>
        <name>Zn(2+)</name>
        <dbReference type="ChEBI" id="CHEBI:29105"/>
        <label>1</label>
        <note>catalytic</note>
    </ligand>
</feature>
<feature type="binding site" evidence="1 6">
    <location>
        <position position="98"/>
    </location>
    <ligand>
        <name>Zn(2+)</name>
        <dbReference type="ChEBI" id="CHEBI:29105"/>
        <label>2</label>
    </ligand>
</feature>
<feature type="binding site" evidence="1 6">
    <location>
        <position position="101"/>
    </location>
    <ligand>
        <name>Zn(2+)</name>
        <dbReference type="ChEBI" id="CHEBI:29105"/>
        <label>2</label>
    </ligand>
</feature>
<feature type="binding site" evidence="1 6">
    <location>
        <position position="104"/>
    </location>
    <ligand>
        <name>Zn(2+)</name>
        <dbReference type="ChEBI" id="CHEBI:29105"/>
        <label>2</label>
    </ligand>
</feature>
<feature type="binding site" evidence="1 6">
    <location>
        <position position="112"/>
    </location>
    <ligand>
        <name>Zn(2+)</name>
        <dbReference type="ChEBI" id="CHEBI:29105"/>
        <label>2</label>
    </ligand>
</feature>
<feature type="binding site" evidence="1 6">
    <location>
        <position position="170"/>
    </location>
    <ligand>
        <name>Zn(2+)</name>
        <dbReference type="ChEBI" id="CHEBI:29105"/>
        <label>1</label>
        <note>catalytic</note>
    </ligand>
</feature>
<feature type="binding site" evidence="1 6">
    <location>
        <position position="198"/>
    </location>
    <ligand>
        <name>NAD(+)</name>
        <dbReference type="ChEBI" id="CHEBI:57540"/>
    </ligand>
</feature>
<feature type="binding site" evidence="1 6">
    <location>
        <position position="218"/>
    </location>
    <ligand>
        <name>NAD(+)</name>
        <dbReference type="ChEBI" id="CHEBI:57540"/>
    </ligand>
</feature>
<feature type="binding site" evidence="1 6">
    <location>
        <position position="223"/>
    </location>
    <ligand>
        <name>NAD(+)</name>
        <dbReference type="ChEBI" id="CHEBI:57540"/>
    </ligand>
</feature>
<feature type="binding site" evidence="1 6">
    <location>
        <position position="263"/>
    </location>
    <ligand>
        <name>NAD(+)</name>
        <dbReference type="ChEBI" id="CHEBI:57540"/>
    </ligand>
</feature>
<feature type="binding site" evidence="1 6">
    <location>
        <position position="268"/>
    </location>
    <ligand>
        <name>NAD(+)</name>
        <dbReference type="ChEBI" id="CHEBI:57540"/>
    </ligand>
</feature>
<feature type="binding site" evidence="1 6">
    <location>
        <position position="300"/>
    </location>
    <ligand>
        <name>NAD(+)</name>
        <dbReference type="ChEBI" id="CHEBI:57540"/>
    </ligand>
</feature>
<feature type="binding site" evidence="1 6">
    <location>
        <position position="338"/>
    </location>
    <ligand>
        <name>NAD(+)</name>
        <dbReference type="ChEBI" id="CHEBI:57540"/>
    </ligand>
</feature>
<feature type="binding site" evidence="1 6">
    <location>
        <position position="339"/>
    </location>
    <ligand>
        <name>NAD(+)</name>
        <dbReference type="ChEBI" id="CHEBI:57540"/>
    </ligand>
</feature>
<comment type="function">
    <text evidence="2">Dehydrogenase that catalyzes the NAD(+)-dependent oxidation of formaldehyde and acetaldehyde (PubMed:24125754). Shows no detectable activity against either aldehydes with longer carbon chains or ethanol (PubMed:24125754).</text>
</comment>
<comment type="catalytic activity">
    <reaction evidence="1 2">
        <text>formaldehyde + NAD(+) + H2O = formate + NADH + 2 H(+)</text>
        <dbReference type="Rhea" id="RHEA:16425"/>
        <dbReference type="ChEBI" id="CHEBI:15377"/>
        <dbReference type="ChEBI" id="CHEBI:15378"/>
        <dbReference type="ChEBI" id="CHEBI:15740"/>
        <dbReference type="ChEBI" id="CHEBI:16842"/>
        <dbReference type="ChEBI" id="CHEBI:57540"/>
        <dbReference type="ChEBI" id="CHEBI:57945"/>
        <dbReference type="EC" id="1.2.1.46"/>
    </reaction>
</comment>
<comment type="catalytic activity">
    <reaction evidence="2">
        <text>acetaldehyde + NAD(+) + H2O = acetate + NADH + 2 H(+)</text>
        <dbReference type="Rhea" id="RHEA:25294"/>
        <dbReference type="ChEBI" id="CHEBI:15343"/>
        <dbReference type="ChEBI" id="CHEBI:15377"/>
        <dbReference type="ChEBI" id="CHEBI:15378"/>
        <dbReference type="ChEBI" id="CHEBI:30089"/>
        <dbReference type="ChEBI" id="CHEBI:57540"/>
        <dbReference type="ChEBI" id="CHEBI:57945"/>
    </reaction>
</comment>
<comment type="cofactor">
    <cofactor evidence="1">
        <name>Zn(2+)</name>
        <dbReference type="ChEBI" id="CHEBI:29105"/>
    </cofactor>
    <text evidence="1">Binds 2 Zn(2+) ions per subunit.</text>
</comment>
<comment type="biophysicochemical properties">
    <kinetics>
        <KM evidence="1 2">15.3 uM for formaldehyde</KM>
        <KM evidence="1 2">55 uM for NAD(+)</KM>
    </kinetics>
</comment>
<comment type="subunit">
    <text evidence="1 2">Homotetramer.</text>
</comment>
<comment type="similarity">
    <text evidence="4">Belongs to the zinc-containing alcohol dehydrogenase family.</text>
</comment>
<organism>
    <name type="scientific">Pseudomonas aeruginosa (strain LESB58)</name>
    <dbReference type="NCBI Taxonomy" id="557722"/>
    <lineage>
        <taxon>Bacteria</taxon>
        <taxon>Pseudomonadati</taxon>
        <taxon>Pseudomonadota</taxon>
        <taxon>Gammaproteobacteria</taxon>
        <taxon>Pseudomonadales</taxon>
        <taxon>Pseudomonadaceae</taxon>
        <taxon>Pseudomonas</taxon>
    </lineage>
</organism>
<keyword id="KW-0002">3D-structure</keyword>
<keyword id="KW-0479">Metal-binding</keyword>
<keyword id="KW-0520">NAD</keyword>
<keyword id="KW-0560">Oxidoreductase</keyword>
<keyword id="KW-0862">Zinc</keyword>
<accession>P0DXZ0</accession>
<proteinExistence type="evidence at protein level"/>
<sequence>MSGNRGVVYLGPGKVEVQNIPYPKMQDPQGRQIDHGVILRVVSTNICGSDQHMVRGRTTAPEGLVLGHEITGEVVEIGRGVETMKIGDLVSVPFNVACGHCRTCKEQHTGVCLTVNPARAGGAYGYVDMGGWVGGQAEYVLVPYADFNLLKLPNREAAMEKIRDLTCLSDILPTGYHGAVTAGVGPGSTVYIAGAGPVGLAAAASARLLGAAVVIVGDVNPTRLAHAKKQGFEIADLSKDTPLHEQIAALLGEPEVDCAVDAVGFEARGHGHSGSQQEAPATVLNSLMGITRVAGKIGIPGLYVTEDPGAVDAAAKHGALSIRFGLGWAKSHSFHTGQTPVMKYNRQLMQAIMWDRIKIADIVGVEVITLDDAPKGYGEFDAGVPKKFVIDPHNLFRAA</sequence>